<gene>
    <name evidence="1" type="primary">ilvD</name>
    <name type="ordered locus">PC1_4029</name>
</gene>
<name>ILVD_PECCP</name>
<accession>C6DHH1</accession>
<evidence type="ECO:0000255" key="1">
    <source>
        <dbReference type="HAMAP-Rule" id="MF_00012"/>
    </source>
</evidence>
<sequence length="616" mass="65547">MPKYRSATTTHGRNMAGARALWRATGMTDNDFGKPIIAVVNSFTQFVPGHVHLRDLGKLVAEQIEASGGVAKEFNTIAVDDGIAMGHGGMLYSLPSRELIADSVEYMVNAHCADAMVCISNCDKITPGMLMASLRLNIPVIFVSGGPMEAGKTKLSDQIIKLDLVDAMIQGADPKVSDEQSEQVERSACPTCGSCSGMFTANSMNCLTEALGLSQPGNGSLLATHADRKQLFLNAGKRIVGLAKRYYEQDDESVLPRNIANKAAFENAMILDIAMGGSTNTVLHLLAAAQEGEVDFTMTDIDRLSRQVPHLCKVAPSTQKYHMEDVHRAGGVIGILGELDRAGLLNREVNNVLGKTLPETLEAYDVMLTQDDSVKSMYSAGPAGIRTTQAFSQDCRWDSLDTDRQEGCIRSREFAYSQDGGLAVLYGNLAENGCIVKTAGVDEGSLVFRGPAKVYESQDDAVDAILGGKVVAGDVVVIRYEGPKGGPGMQEMLYPTTYLKSMGLGKSCALITDGRFSGGTSGLSIGHASPEAASGGTIALVQDGDIIAIDIPNRSIALVLDDNALASRRAAEEARGDQAWTPHNRERQVSFALRAYASLATSADKGAVRDKSKLGG</sequence>
<reference key="1">
    <citation type="submission" date="2009-07" db="EMBL/GenBank/DDBJ databases">
        <title>Complete sequence of Pectobacterium carotovorum subsp. carotovorum PC1.</title>
        <authorList>
            <consortium name="US DOE Joint Genome Institute"/>
            <person name="Lucas S."/>
            <person name="Copeland A."/>
            <person name="Lapidus A."/>
            <person name="Glavina del Rio T."/>
            <person name="Tice H."/>
            <person name="Bruce D."/>
            <person name="Goodwin L."/>
            <person name="Pitluck S."/>
            <person name="Munk A.C."/>
            <person name="Brettin T."/>
            <person name="Detter J.C."/>
            <person name="Han C."/>
            <person name="Tapia R."/>
            <person name="Larimer F."/>
            <person name="Land M."/>
            <person name="Hauser L."/>
            <person name="Kyrpides N."/>
            <person name="Mikhailova N."/>
            <person name="Balakrishnan V."/>
            <person name="Glasner J."/>
            <person name="Perna N.T."/>
        </authorList>
    </citation>
    <scope>NUCLEOTIDE SEQUENCE [LARGE SCALE GENOMIC DNA]</scope>
    <source>
        <strain>PC1</strain>
    </source>
</reference>
<protein>
    <recommendedName>
        <fullName evidence="1">Dihydroxy-acid dehydratase</fullName>
        <shortName evidence="1">DAD</shortName>
        <ecNumber evidence="1">4.2.1.9</ecNumber>
    </recommendedName>
</protein>
<proteinExistence type="inferred from homology"/>
<comment type="function">
    <text evidence="1">Functions in the biosynthesis of branched-chain amino acids. Catalyzes the dehydration of (2R,3R)-2,3-dihydroxy-3-methylpentanoate (2,3-dihydroxy-3-methylvalerate) into 2-oxo-3-methylpentanoate (2-oxo-3-methylvalerate) and of (2R)-2,3-dihydroxy-3-methylbutanoate (2,3-dihydroxyisovalerate) into 2-oxo-3-methylbutanoate (2-oxoisovalerate), the penultimate precursor to L-isoleucine and L-valine, respectively.</text>
</comment>
<comment type="catalytic activity">
    <reaction evidence="1">
        <text>(2R)-2,3-dihydroxy-3-methylbutanoate = 3-methyl-2-oxobutanoate + H2O</text>
        <dbReference type="Rhea" id="RHEA:24809"/>
        <dbReference type="ChEBI" id="CHEBI:11851"/>
        <dbReference type="ChEBI" id="CHEBI:15377"/>
        <dbReference type="ChEBI" id="CHEBI:49072"/>
        <dbReference type="EC" id="4.2.1.9"/>
    </reaction>
    <physiologicalReaction direction="left-to-right" evidence="1">
        <dbReference type="Rhea" id="RHEA:24810"/>
    </physiologicalReaction>
</comment>
<comment type="catalytic activity">
    <reaction evidence="1">
        <text>(2R,3R)-2,3-dihydroxy-3-methylpentanoate = (S)-3-methyl-2-oxopentanoate + H2O</text>
        <dbReference type="Rhea" id="RHEA:27694"/>
        <dbReference type="ChEBI" id="CHEBI:15377"/>
        <dbReference type="ChEBI" id="CHEBI:35146"/>
        <dbReference type="ChEBI" id="CHEBI:49258"/>
        <dbReference type="EC" id="4.2.1.9"/>
    </reaction>
    <physiologicalReaction direction="left-to-right" evidence="1">
        <dbReference type="Rhea" id="RHEA:27695"/>
    </physiologicalReaction>
</comment>
<comment type="cofactor">
    <cofactor evidence="1">
        <name>[2Fe-2S] cluster</name>
        <dbReference type="ChEBI" id="CHEBI:190135"/>
    </cofactor>
    <text evidence="1">Binds 1 [2Fe-2S] cluster per subunit. This cluster acts as a Lewis acid cofactor.</text>
</comment>
<comment type="cofactor">
    <cofactor evidence="1">
        <name>Mg(2+)</name>
        <dbReference type="ChEBI" id="CHEBI:18420"/>
    </cofactor>
</comment>
<comment type="pathway">
    <text evidence="1">Amino-acid biosynthesis; L-isoleucine biosynthesis; L-isoleucine from 2-oxobutanoate: step 3/4.</text>
</comment>
<comment type="pathway">
    <text evidence="1">Amino-acid biosynthesis; L-valine biosynthesis; L-valine from pyruvate: step 3/4.</text>
</comment>
<comment type="subunit">
    <text evidence="1">Homodimer.</text>
</comment>
<comment type="similarity">
    <text evidence="1">Belongs to the IlvD/Edd family.</text>
</comment>
<organism>
    <name type="scientific">Pectobacterium carotovorum subsp. carotovorum (strain PC1)</name>
    <dbReference type="NCBI Taxonomy" id="561230"/>
    <lineage>
        <taxon>Bacteria</taxon>
        <taxon>Pseudomonadati</taxon>
        <taxon>Pseudomonadota</taxon>
        <taxon>Gammaproteobacteria</taxon>
        <taxon>Enterobacterales</taxon>
        <taxon>Pectobacteriaceae</taxon>
        <taxon>Pectobacterium</taxon>
    </lineage>
</organism>
<keyword id="KW-0001">2Fe-2S</keyword>
<keyword id="KW-0028">Amino-acid biosynthesis</keyword>
<keyword id="KW-0100">Branched-chain amino acid biosynthesis</keyword>
<keyword id="KW-0408">Iron</keyword>
<keyword id="KW-0411">Iron-sulfur</keyword>
<keyword id="KW-0456">Lyase</keyword>
<keyword id="KW-0460">Magnesium</keyword>
<keyword id="KW-0479">Metal-binding</keyword>
<dbReference type="EC" id="4.2.1.9" evidence="1"/>
<dbReference type="EMBL" id="CP001657">
    <property type="protein sequence ID" value="ACT15044.1"/>
    <property type="molecule type" value="Genomic_DNA"/>
</dbReference>
<dbReference type="RefSeq" id="WP_015842123.1">
    <property type="nucleotide sequence ID" value="NC_012917.1"/>
</dbReference>
<dbReference type="SMR" id="C6DHH1"/>
<dbReference type="STRING" id="561230.PC1_4029"/>
<dbReference type="GeneID" id="67792053"/>
<dbReference type="KEGG" id="pct:PC1_4029"/>
<dbReference type="eggNOG" id="COG0129">
    <property type="taxonomic scope" value="Bacteria"/>
</dbReference>
<dbReference type="HOGENOM" id="CLU_014271_4_2_6"/>
<dbReference type="OrthoDB" id="9807077at2"/>
<dbReference type="UniPathway" id="UPA00047">
    <property type="reaction ID" value="UER00057"/>
</dbReference>
<dbReference type="UniPathway" id="UPA00049">
    <property type="reaction ID" value="UER00061"/>
</dbReference>
<dbReference type="Proteomes" id="UP000002736">
    <property type="component" value="Chromosome"/>
</dbReference>
<dbReference type="GO" id="GO:0005829">
    <property type="term" value="C:cytosol"/>
    <property type="evidence" value="ECO:0007669"/>
    <property type="project" value="TreeGrafter"/>
</dbReference>
<dbReference type="GO" id="GO:0051537">
    <property type="term" value="F:2 iron, 2 sulfur cluster binding"/>
    <property type="evidence" value="ECO:0007669"/>
    <property type="project" value="UniProtKB-UniRule"/>
</dbReference>
<dbReference type="GO" id="GO:0004160">
    <property type="term" value="F:dihydroxy-acid dehydratase activity"/>
    <property type="evidence" value="ECO:0007669"/>
    <property type="project" value="UniProtKB-UniRule"/>
</dbReference>
<dbReference type="GO" id="GO:0000287">
    <property type="term" value="F:magnesium ion binding"/>
    <property type="evidence" value="ECO:0007669"/>
    <property type="project" value="UniProtKB-UniRule"/>
</dbReference>
<dbReference type="GO" id="GO:0009097">
    <property type="term" value="P:isoleucine biosynthetic process"/>
    <property type="evidence" value="ECO:0007669"/>
    <property type="project" value="UniProtKB-UniRule"/>
</dbReference>
<dbReference type="GO" id="GO:0009099">
    <property type="term" value="P:L-valine biosynthetic process"/>
    <property type="evidence" value="ECO:0007669"/>
    <property type="project" value="UniProtKB-UniRule"/>
</dbReference>
<dbReference type="FunFam" id="3.50.30.80:FF:000001">
    <property type="entry name" value="Dihydroxy-acid dehydratase"/>
    <property type="match status" value="1"/>
</dbReference>
<dbReference type="Gene3D" id="3.50.30.80">
    <property type="entry name" value="IlvD/EDD C-terminal domain-like"/>
    <property type="match status" value="1"/>
</dbReference>
<dbReference type="HAMAP" id="MF_00012">
    <property type="entry name" value="IlvD"/>
    <property type="match status" value="1"/>
</dbReference>
<dbReference type="InterPro" id="IPR042096">
    <property type="entry name" value="Dihydro-acid_dehy_C"/>
</dbReference>
<dbReference type="InterPro" id="IPR004404">
    <property type="entry name" value="DihydroxyA_deHydtase"/>
</dbReference>
<dbReference type="InterPro" id="IPR020558">
    <property type="entry name" value="DiOHA_6PGluconate_deHydtase_CS"/>
</dbReference>
<dbReference type="InterPro" id="IPR056740">
    <property type="entry name" value="ILV_EDD_C"/>
</dbReference>
<dbReference type="InterPro" id="IPR000581">
    <property type="entry name" value="ILV_EDD_N"/>
</dbReference>
<dbReference type="InterPro" id="IPR037237">
    <property type="entry name" value="IlvD/EDD_N"/>
</dbReference>
<dbReference type="NCBIfam" id="TIGR00110">
    <property type="entry name" value="ilvD"/>
    <property type="match status" value="1"/>
</dbReference>
<dbReference type="NCBIfam" id="NF009103">
    <property type="entry name" value="PRK12448.1"/>
    <property type="match status" value="1"/>
</dbReference>
<dbReference type="PANTHER" id="PTHR43661">
    <property type="entry name" value="D-XYLONATE DEHYDRATASE"/>
    <property type="match status" value="1"/>
</dbReference>
<dbReference type="PANTHER" id="PTHR43661:SF3">
    <property type="entry name" value="D-XYLONATE DEHYDRATASE YAGF-RELATED"/>
    <property type="match status" value="1"/>
</dbReference>
<dbReference type="Pfam" id="PF24877">
    <property type="entry name" value="ILV_EDD_C"/>
    <property type="match status" value="1"/>
</dbReference>
<dbReference type="Pfam" id="PF00920">
    <property type="entry name" value="ILVD_EDD_N"/>
    <property type="match status" value="1"/>
</dbReference>
<dbReference type="SUPFAM" id="SSF143975">
    <property type="entry name" value="IlvD/EDD N-terminal domain-like"/>
    <property type="match status" value="1"/>
</dbReference>
<dbReference type="SUPFAM" id="SSF52016">
    <property type="entry name" value="LeuD/IlvD-like"/>
    <property type="match status" value="1"/>
</dbReference>
<dbReference type="PROSITE" id="PS00886">
    <property type="entry name" value="ILVD_EDD_1"/>
    <property type="match status" value="1"/>
</dbReference>
<dbReference type="PROSITE" id="PS00887">
    <property type="entry name" value="ILVD_EDD_2"/>
    <property type="match status" value="1"/>
</dbReference>
<feature type="chain" id="PRO_1000201781" description="Dihydroxy-acid dehydratase">
    <location>
        <begin position="1"/>
        <end position="616"/>
    </location>
</feature>
<feature type="active site" description="Proton acceptor" evidence="1">
    <location>
        <position position="517"/>
    </location>
</feature>
<feature type="binding site" evidence="1">
    <location>
        <position position="81"/>
    </location>
    <ligand>
        <name>Mg(2+)</name>
        <dbReference type="ChEBI" id="CHEBI:18420"/>
    </ligand>
</feature>
<feature type="binding site" evidence="1">
    <location>
        <position position="122"/>
    </location>
    <ligand>
        <name>[2Fe-2S] cluster</name>
        <dbReference type="ChEBI" id="CHEBI:190135"/>
    </ligand>
</feature>
<feature type="binding site" evidence="1">
    <location>
        <position position="123"/>
    </location>
    <ligand>
        <name>Mg(2+)</name>
        <dbReference type="ChEBI" id="CHEBI:18420"/>
    </ligand>
</feature>
<feature type="binding site" description="via carbamate group" evidence="1">
    <location>
        <position position="124"/>
    </location>
    <ligand>
        <name>Mg(2+)</name>
        <dbReference type="ChEBI" id="CHEBI:18420"/>
    </ligand>
</feature>
<feature type="binding site" evidence="1">
    <location>
        <position position="195"/>
    </location>
    <ligand>
        <name>[2Fe-2S] cluster</name>
        <dbReference type="ChEBI" id="CHEBI:190135"/>
    </ligand>
</feature>
<feature type="binding site" evidence="1">
    <location>
        <position position="491"/>
    </location>
    <ligand>
        <name>Mg(2+)</name>
        <dbReference type="ChEBI" id="CHEBI:18420"/>
    </ligand>
</feature>
<feature type="modified residue" description="N6-carboxylysine" evidence="1">
    <location>
        <position position="124"/>
    </location>
</feature>